<evidence type="ECO:0000250" key="1"/>
<evidence type="ECO:0000250" key="2">
    <source>
        <dbReference type="UniProtKB" id="O00258"/>
    </source>
</evidence>
<evidence type="ECO:0000255" key="3"/>
<evidence type="ECO:0000305" key="4"/>
<evidence type="ECO:0000312" key="5">
    <source>
        <dbReference type="MGI" id="MGI:2136882"/>
    </source>
</evidence>
<proteinExistence type="evidence at protein level"/>
<gene>
    <name evidence="5" type="primary">Get1</name>
    <name evidence="5" type="synonym">Wrb</name>
</gene>
<keyword id="KW-0175">Coiled coil</keyword>
<keyword id="KW-0256">Endoplasmic reticulum</keyword>
<keyword id="KW-0472">Membrane</keyword>
<keyword id="KW-1185">Reference proteome</keyword>
<keyword id="KW-0812">Transmembrane</keyword>
<keyword id="KW-1133">Transmembrane helix</keyword>
<dbReference type="EMBL" id="AK172079">
    <property type="protein sequence ID" value="BAE42815.1"/>
    <property type="molecule type" value="mRNA"/>
</dbReference>
<dbReference type="EMBL" id="BC031769">
    <property type="protein sequence ID" value="AAH31769.1"/>
    <property type="molecule type" value="mRNA"/>
</dbReference>
<dbReference type="CCDS" id="CCDS28354.1"/>
<dbReference type="RefSeq" id="NP_997184.1">
    <property type="nucleotide sequence ID" value="NM_207301.3"/>
</dbReference>
<dbReference type="SMR" id="Q8K0D7"/>
<dbReference type="BioGRID" id="214712">
    <property type="interactions" value="4"/>
</dbReference>
<dbReference type="FunCoup" id="Q8K0D7">
    <property type="interactions" value="1618"/>
</dbReference>
<dbReference type="STRING" id="10090.ENSMUSP00000023913"/>
<dbReference type="PhosphoSitePlus" id="Q8K0D7"/>
<dbReference type="SwissPalm" id="Q8K0D7"/>
<dbReference type="PaxDb" id="10090-ENSMUSP00000023913"/>
<dbReference type="PeptideAtlas" id="Q8K0D7"/>
<dbReference type="ProteomicsDB" id="275218"/>
<dbReference type="Pumba" id="Q8K0D7"/>
<dbReference type="DNASU" id="71446"/>
<dbReference type="Ensembl" id="ENSMUST00000023913.11">
    <property type="protein sequence ID" value="ENSMUSP00000023913.9"/>
    <property type="gene ID" value="ENSMUSG00000023147.18"/>
</dbReference>
<dbReference type="GeneID" id="71446"/>
<dbReference type="KEGG" id="mmu:71446"/>
<dbReference type="UCSC" id="uc008acp.1">
    <property type="organism name" value="mouse"/>
</dbReference>
<dbReference type="AGR" id="MGI:2136882"/>
<dbReference type="CTD" id="7485"/>
<dbReference type="MGI" id="MGI:2136882">
    <property type="gene designation" value="Get1"/>
</dbReference>
<dbReference type="VEuPathDB" id="HostDB:ENSMUSG00000023147"/>
<dbReference type="eggNOG" id="KOG4253">
    <property type="taxonomic scope" value="Eukaryota"/>
</dbReference>
<dbReference type="GeneTree" id="ENSGT01050000248375"/>
<dbReference type="HOGENOM" id="CLU_121992_0_0_1"/>
<dbReference type="InParanoid" id="Q8K0D7"/>
<dbReference type="OMA" id="AEWIISF"/>
<dbReference type="OrthoDB" id="73143at9989"/>
<dbReference type="PhylomeDB" id="Q8K0D7"/>
<dbReference type="TreeFam" id="TF314708"/>
<dbReference type="BioGRID-ORCS" id="71446">
    <property type="hits" value="27 hits in 81 CRISPR screens"/>
</dbReference>
<dbReference type="ChiTaRS" id="Wrb">
    <property type="organism name" value="mouse"/>
</dbReference>
<dbReference type="PRO" id="PR:Q8K0D7"/>
<dbReference type="Proteomes" id="UP000000589">
    <property type="component" value="Chromosome 16"/>
</dbReference>
<dbReference type="RNAct" id="Q8K0D7">
    <property type="molecule type" value="protein"/>
</dbReference>
<dbReference type="Bgee" id="ENSMUSG00000023147">
    <property type="expression patterns" value="Expressed in floor plate of midbrain and 250 other cell types or tissues"/>
</dbReference>
<dbReference type="ExpressionAtlas" id="Q8K0D7">
    <property type="expression patterns" value="baseline and differential"/>
</dbReference>
<dbReference type="GO" id="GO:0005783">
    <property type="term" value="C:endoplasmic reticulum"/>
    <property type="evidence" value="ECO:0000266"/>
    <property type="project" value="MGI"/>
</dbReference>
<dbReference type="GO" id="GO:0005789">
    <property type="term" value="C:endoplasmic reticulum membrane"/>
    <property type="evidence" value="ECO:0007669"/>
    <property type="project" value="UniProtKB-SubCell"/>
</dbReference>
<dbReference type="GO" id="GO:0043529">
    <property type="term" value="C:GET complex"/>
    <property type="evidence" value="ECO:0000250"/>
    <property type="project" value="UniProtKB"/>
</dbReference>
<dbReference type="GO" id="GO:0051649">
    <property type="term" value="P:establishment of localization in cell"/>
    <property type="evidence" value="ECO:0000315"/>
    <property type="project" value="MGI"/>
</dbReference>
<dbReference type="GO" id="GO:0071599">
    <property type="term" value="P:otic vesicle development"/>
    <property type="evidence" value="ECO:0000315"/>
    <property type="project" value="MGI"/>
</dbReference>
<dbReference type="GO" id="GO:0006620">
    <property type="term" value="P:post-translational protein targeting to endoplasmic reticulum membrane"/>
    <property type="evidence" value="ECO:0000315"/>
    <property type="project" value="MGI"/>
</dbReference>
<dbReference type="GO" id="GO:0045048">
    <property type="term" value="P:protein insertion into ER membrane"/>
    <property type="evidence" value="ECO:0000250"/>
    <property type="project" value="UniProtKB"/>
</dbReference>
<dbReference type="GO" id="GO:0050821">
    <property type="term" value="P:protein stabilization"/>
    <property type="evidence" value="ECO:0000250"/>
    <property type="project" value="UniProtKB"/>
</dbReference>
<dbReference type="GO" id="GO:0007605">
    <property type="term" value="P:sensory perception of sound"/>
    <property type="evidence" value="ECO:0000315"/>
    <property type="project" value="MGI"/>
</dbReference>
<dbReference type="GO" id="GO:0001964">
    <property type="term" value="P:startle response"/>
    <property type="evidence" value="ECO:0000266"/>
    <property type="project" value="MGI"/>
</dbReference>
<dbReference type="GO" id="GO:0050808">
    <property type="term" value="P:synapse organization"/>
    <property type="evidence" value="ECO:0000315"/>
    <property type="project" value="MGI"/>
</dbReference>
<dbReference type="GO" id="GO:0071816">
    <property type="term" value="P:tail-anchored membrane protein insertion into ER membrane"/>
    <property type="evidence" value="ECO:0000250"/>
    <property type="project" value="UniProtKB"/>
</dbReference>
<dbReference type="FunFam" id="1.10.287.660:FF:000004">
    <property type="entry name" value="tail-anchored protein insertion receptor WRB"/>
    <property type="match status" value="1"/>
</dbReference>
<dbReference type="Gene3D" id="1.10.287.660">
    <property type="entry name" value="Helix hairpin bin"/>
    <property type="match status" value="1"/>
</dbReference>
<dbReference type="InterPro" id="IPR028945">
    <property type="entry name" value="Get1"/>
</dbReference>
<dbReference type="InterPro" id="IPR029012">
    <property type="entry name" value="Helix_hairpin_bin_sf"/>
</dbReference>
<dbReference type="PANTHER" id="PTHR42650:SF1">
    <property type="entry name" value="GUIDED ENTRY OF TAIL-ANCHORED PROTEINS FACTOR 1"/>
    <property type="match status" value="1"/>
</dbReference>
<dbReference type="PANTHER" id="PTHR42650">
    <property type="entry name" value="TAIL-ANCHORED PROTEIN INSERTION RECEPTOR WRB"/>
    <property type="match status" value="1"/>
</dbReference>
<dbReference type="Pfam" id="PF04420">
    <property type="entry name" value="CHD5"/>
    <property type="match status" value="1"/>
</dbReference>
<sequence>MSASETDRWAWLLVLSFVFGCNLLRILLPSLSSFISRVLQKDAEQESQMRAEIQGMKQELSTVNMMDEFARYARLERKINKMTDKLKTHVKARTAQLAKIKWFISVAFYILQAALMISLIWKYYSVPVAVVPSKWITPLDRLVAFPTRVAGGIGITCWILVCNKVVAIVLHPFS</sequence>
<protein>
    <recommendedName>
        <fullName evidence="5">Guided entry of tail-anchored proteins factor 1</fullName>
    </recommendedName>
    <alternativeName>
        <fullName>Tail-anchored protein insertion receptor WRB</fullName>
    </alternativeName>
    <alternativeName>
        <fullName>Tryptophan-rich basic protein</fullName>
    </alternativeName>
</protein>
<comment type="function">
    <text evidence="2">Required for the post-translational delivery of tail-anchored (TA) proteins to the endoplasmic reticulum. Together with CAMLG/GET2, acts as a membrane receptor for soluble GET3/TRC40, which recognizes and selectively binds the transmembrane domain of TA proteins in the cytosol. Required to ensure correct topology and ER insertion of CAMLG.</text>
</comment>
<comment type="subunit">
    <text evidence="2">Component of the Golgi to ER traffic (GET) complex, which is composed of GET1, CAMLG/GET2 and GET3. Within the complex, GET1 and CAMLG form a heterotetramer which is stabilized by phosphatidylinositol binding and which binds to the GET3 homodimer. Interacts with CAMLG/GET2 (via C-terminus). GET3 shows a higher affinity for CAMLG than for GET1.</text>
</comment>
<comment type="subcellular location">
    <subcellularLocation>
        <location evidence="2">Endoplasmic reticulum membrane</location>
        <topology evidence="3">Multi-pass membrane protein</topology>
    </subcellularLocation>
</comment>
<comment type="similarity">
    <text evidence="4">Belongs to the WRB/GET1 family.</text>
</comment>
<organism>
    <name type="scientific">Mus musculus</name>
    <name type="common">Mouse</name>
    <dbReference type="NCBI Taxonomy" id="10090"/>
    <lineage>
        <taxon>Eukaryota</taxon>
        <taxon>Metazoa</taxon>
        <taxon>Chordata</taxon>
        <taxon>Craniata</taxon>
        <taxon>Vertebrata</taxon>
        <taxon>Euteleostomi</taxon>
        <taxon>Mammalia</taxon>
        <taxon>Eutheria</taxon>
        <taxon>Euarchontoglires</taxon>
        <taxon>Glires</taxon>
        <taxon>Rodentia</taxon>
        <taxon>Myomorpha</taxon>
        <taxon>Muroidea</taxon>
        <taxon>Muridae</taxon>
        <taxon>Murinae</taxon>
        <taxon>Mus</taxon>
        <taxon>Mus</taxon>
    </lineage>
</organism>
<reference key="1">
    <citation type="journal article" date="2005" name="Science">
        <title>The transcriptional landscape of the mammalian genome.</title>
        <authorList>
            <person name="Carninci P."/>
            <person name="Kasukawa T."/>
            <person name="Katayama S."/>
            <person name="Gough J."/>
            <person name="Frith M.C."/>
            <person name="Maeda N."/>
            <person name="Oyama R."/>
            <person name="Ravasi T."/>
            <person name="Lenhard B."/>
            <person name="Wells C."/>
            <person name="Kodzius R."/>
            <person name="Shimokawa K."/>
            <person name="Bajic V.B."/>
            <person name="Brenner S.E."/>
            <person name="Batalov S."/>
            <person name="Forrest A.R."/>
            <person name="Zavolan M."/>
            <person name="Davis M.J."/>
            <person name="Wilming L.G."/>
            <person name="Aidinis V."/>
            <person name="Allen J.E."/>
            <person name="Ambesi-Impiombato A."/>
            <person name="Apweiler R."/>
            <person name="Aturaliya R.N."/>
            <person name="Bailey T.L."/>
            <person name="Bansal M."/>
            <person name="Baxter L."/>
            <person name="Beisel K.W."/>
            <person name="Bersano T."/>
            <person name="Bono H."/>
            <person name="Chalk A.M."/>
            <person name="Chiu K.P."/>
            <person name="Choudhary V."/>
            <person name="Christoffels A."/>
            <person name="Clutterbuck D.R."/>
            <person name="Crowe M.L."/>
            <person name="Dalla E."/>
            <person name="Dalrymple B.P."/>
            <person name="de Bono B."/>
            <person name="Della Gatta G."/>
            <person name="di Bernardo D."/>
            <person name="Down T."/>
            <person name="Engstrom P."/>
            <person name="Fagiolini M."/>
            <person name="Faulkner G."/>
            <person name="Fletcher C.F."/>
            <person name="Fukushima T."/>
            <person name="Furuno M."/>
            <person name="Futaki S."/>
            <person name="Gariboldi M."/>
            <person name="Georgii-Hemming P."/>
            <person name="Gingeras T.R."/>
            <person name="Gojobori T."/>
            <person name="Green R.E."/>
            <person name="Gustincich S."/>
            <person name="Harbers M."/>
            <person name="Hayashi Y."/>
            <person name="Hensch T.K."/>
            <person name="Hirokawa N."/>
            <person name="Hill D."/>
            <person name="Huminiecki L."/>
            <person name="Iacono M."/>
            <person name="Ikeo K."/>
            <person name="Iwama A."/>
            <person name="Ishikawa T."/>
            <person name="Jakt M."/>
            <person name="Kanapin A."/>
            <person name="Katoh M."/>
            <person name="Kawasawa Y."/>
            <person name="Kelso J."/>
            <person name="Kitamura H."/>
            <person name="Kitano H."/>
            <person name="Kollias G."/>
            <person name="Krishnan S.P."/>
            <person name="Kruger A."/>
            <person name="Kummerfeld S.K."/>
            <person name="Kurochkin I.V."/>
            <person name="Lareau L.F."/>
            <person name="Lazarevic D."/>
            <person name="Lipovich L."/>
            <person name="Liu J."/>
            <person name="Liuni S."/>
            <person name="McWilliam S."/>
            <person name="Madan Babu M."/>
            <person name="Madera M."/>
            <person name="Marchionni L."/>
            <person name="Matsuda H."/>
            <person name="Matsuzawa S."/>
            <person name="Miki H."/>
            <person name="Mignone F."/>
            <person name="Miyake S."/>
            <person name="Morris K."/>
            <person name="Mottagui-Tabar S."/>
            <person name="Mulder N."/>
            <person name="Nakano N."/>
            <person name="Nakauchi H."/>
            <person name="Ng P."/>
            <person name="Nilsson R."/>
            <person name="Nishiguchi S."/>
            <person name="Nishikawa S."/>
            <person name="Nori F."/>
            <person name="Ohara O."/>
            <person name="Okazaki Y."/>
            <person name="Orlando V."/>
            <person name="Pang K.C."/>
            <person name="Pavan W.J."/>
            <person name="Pavesi G."/>
            <person name="Pesole G."/>
            <person name="Petrovsky N."/>
            <person name="Piazza S."/>
            <person name="Reed J."/>
            <person name="Reid J.F."/>
            <person name="Ring B.Z."/>
            <person name="Ringwald M."/>
            <person name="Rost B."/>
            <person name="Ruan Y."/>
            <person name="Salzberg S.L."/>
            <person name="Sandelin A."/>
            <person name="Schneider C."/>
            <person name="Schoenbach C."/>
            <person name="Sekiguchi K."/>
            <person name="Semple C.A."/>
            <person name="Seno S."/>
            <person name="Sessa L."/>
            <person name="Sheng Y."/>
            <person name="Shibata Y."/>
            <person name="Shimada H."/>
            <person name="Shimada K."/>
            <person name="Silva D."/>
            <person name="Sinclair B."/>
            <person name="Sperling S."/>
            <person name="Stupka E."/>
            <person name="Sugiura K."/>
            <person name="Sultana R."/>
            <person name="Takenaka Y."/>
            <person name="Taki K."/>
            <person name="Tammoja K."/>
            <person name="Tan S.L."/>
            <person name="Tang S."/>
            <person name="Taylor M.S."/>
            <person name="Tegner J."/>
            <person name="Teichmann S.A."/>
            <person name="Ueda H.R."/>
            <person name="van Nimwegen E."/>
            <person name="Verardo R."/>
            <person name="Wei C.L."/>
            <person name="Yagi K."/>
            <person name="Yamanishi H."/>
            <person name="Zabarovsky E."/>
            <person name="Zhu S."/>
            <person name="Zimmer A."/>
            <person name="Hide W."/>
            <person name="Bult C."/>
            <person name="Grimmond S.M."/>
            <person name="Teasdale R.D."/>
            <person name="Liu E.T."/>
            <person name="Brusic V."/>
            <person name="Quackenbush J."/>
            <person name="Wahlestedt C."/>
            <person name="Mattick J.S."/>
            <person name="Hume D.A."/>
            <person name="Kai C."/>
            <person name="Sasaki D."/>
            <person name="Tomaru Y."/>
            <person name="Fukuda S."/>
            <person name="Kanamori-Katayama M."/>
            <person name="Suzuki M."/>
            <person name="Aoki J."/>
            <person name="Arakawa T."/>
            <person name="Iida J."/>
            <person name="Imamura K."/>
            <person name="Itoh M."/>
            <person name="Kato T."/>
            <person name="Kawaji H."/>
            <person name="Kawagashira N."/>
            <person name="Kawashima T."/>
            <person name="Kojima M."/>
            <person name="Kondo S."/>
            <person name="Konno H."/>
            <person name="Nakano K."/>
            <person name="Ninomiya N."/>
            <person name="Nishio T."/>
            <person name="Okada M."/>
            <person name="Plessy C."/>
            <person name="Shibata K."/>
            <person name="Shiraki T."/>
            <person name="Suzuki S."/>
            <person name="Tagami M."/>
            <person name="Waki K."/>
            <person name="Watahiki A."/>
            <person name="Okamura-Oho Y."/>
            <person name="Suzuki H."/>
            <person name="Kawai J."/>
            <person name="Hayashizaki Y."/>
        </authorList>
    </citation>
    <scope>NUCLEOTIDE SEQUENCE [LARGE SCALE MRNA]</scope>
    <source>
        <strain>NOD</strain>
        <tissue>Spleen</tissue>
    </source>
</reference>
<reference key="2">
    <citation type="journal article" date="2004" name="Genome Res.">
        <title>The status, quality, and expansion of the NIH full-length cDNA project: the Mammalian Gene Collection (MGC).</title>
        <authorList>
            <consortium name="The MGC Project Team"/>
        </authorList>
    </citation>
    <scope>NUCLEOTIDE SEQUENCE [LARGE SCALE MRNA]</scope>
    <source>
        <strain>FVB/N</strain>
        <tissue>Kidney</tissue>
    </source>
</reference>
<reference key="3">
    <citation type="journal article" date="2010" name="Cell">
        <title>A tissue-specific atlas of mouse protein phosphorylation and expression.</title>
        <authorList>
            <person name="Huttlin E.L."/>
            <person name="Jedrychowski M.P."/>
            <person name="Elias J.E."/>
            <person name="Goswami T."/>
            <person name="Rad R."/>
            <person name="Beausoleil S.A."/>
            <person name="Villen J."/>
            <person name="Haas W."/>
            <person name="Sowa M.E."/>
            <person name="Gygi S.P."/>
        </authorList>
    </citation>
    <scope>IDENTIFICATION BY MASS SPECTROMETRY [LARGE SCALE ANALYSIS]</scope>
    <source>
        <tissue>Brain</tissue>
        <tissue>Testis</tissue>
    </source>
</reference>
<feature type="chain" id="PRO_0000065980" description="Guided entry of tail-anchored proteins factor 1">
    <location>
        <begin position="1"/>
        <end position="174"/>
    </location>
</feature>
<feature type="topological domain" description="Lumenal" evidence="3">
    <location>
        <begin position="1"/>
        <end position="8"/>
    </location>
</feature>
<feature type="transmembrane region" description="Helical" evidence="3">
    <location>
        <begin position="9"/>
        <end position="29"/>
    </location>
</feature>
<feature type="topological domain" description="Cytoplasmic" evidence="3">
    <location>
        <begin position="30"/>
        <end position="99"/>
    </location>
</feature>
<feature type="transmembrane region" description="Helical" evidence="3">
    <location>
        <begin position="100"/>
        <end position="120"/>
    </location>
</feature>
<feature type="topological domain" description="Lumenal" evidence="3">
    <location>
        <begin position="121"/>
        <end position="148"/>
    </location>
</feature>
<feature type="transmembrane region" description="Helical" evidence="3">
    <location>
        <begin position="149"/>
        <end position="169"/>
    </location>
</feature>
<feature type="topological domain" description="Cytoplasmic" evidence="3">
    <location>
        <begin position="170"/>
        <end position="174"/>
    </location>
</feature>
<feature type="region of interest" description="Interaction with GET3/TRC40" evidence="1">
    <location>
        <begin position="39"/>
        <end position="97"/>
    </location>
</feature>
<feature type="coiled-coil region" evidence="3">
    <location>
        <begin position="39"/>
        <end position="94"/>
    </location>
</feature>
<accession>Q8K0D7</accession>
<accession>Q3TA55</accession>
<accession>Q9D1W0</accession>
<name>GET1_MOUSE</name>